<sequence>MSERLSEETRGPLLGPLFANGWAMVDGRDAIAKTFAFDNFVEAMGWMMRVAIWAEKWNHHPEWSNVYGKVAVVLTTHDVDGLSALDAKLARKMDSLC</sequence>
<organism>
    <name type="scientific">Ruegeria pomeroyi (strain ATCC 700808 / DSM 15171 / DSS-3)</name>
    <name type="common">Silicibacter pomeroyi</name>
    <dbReference type="NCBI Taxonomy" id="246200"/>
    <lineage>
        <taxon>Bacteria</taxon>
        <taxon>Pseudomonadati</taxon>
        <taxon>Pseudomonadota</taxon>
        <taxon>Alphaproteobacteria</taxon>
        <taxon>Rhodobacterales</taxon>
        <taxon>Roseobacteraceae</taxon>
        <taxon>Ruegeria</taxon>
    </lineage>
</organism>
<gene>
    <name type="ordered locus">SPO3733</name>
</gene>
<dbReference type="EC" id="4.2.1.96" evidence="1"/>
<dbReference type="EMBL" id="CP000031">
    <property type="protein sequence ID" value="AAV96954.1"/>
    <property type="molecule type" value="Genomic_DNA"/>
</dbReference>
<dbReference type="RefSeq" id="WP_011049411.1">
    <property type="nucleotide sequence ID" value="NC_003911.12"/>
</dbReference>
<dbReference type="SMR" id="Q5LM31"/>
<dbReference type="STRING" id="246200.SPO3733"/>
<dbReference type="PaxDb" id="246200-SPO3733"/>
<dbReference type="KEGG" id="sil:SPO3733"/>
<dbReference type="eggNOG" id="COG2154">
    <property type="taxonomic scope" value="Bacteria"/>
</dbReference>
<dbReference type="HOGENOM" id="CLU_081974_3_2_5"/>
<dbReference type="OrthoDB" id="9794987at2"/>
<dbReference type="Proteomes" id="UP000001023">
    <property type="component" value="Chromosome"/>
</dbReference>
<dbReference type="GO" id="GO:0008124">
    <property type="term" value="F:4-alpha-hydroxytetrahydrobiopterin dehydratase activity"/>
    <property type="evidence" value="ECO:0007669"/>
    <property type="project" value="UniProtKB-UniRule"/>
</dbReference>
<dbReference type="GO" id="GO:0006729">
    <property type="term" value="P:tetrahydrobiopterin biosynthetic process"/>
    <property type="evidence" value="ECO:0007669"/>
    <property type="project" value="InterPro"/>
</dbReference>
<dbReference type="CDD" id="cd00914">
    <property type="entry name" value="PCD_DCoH_subfamily_b"/>
    <property type="match status" value="1"/>
</dbReference>
<dbReference type="Gene3D" id="3.30.1360.20">
    <property type="entry name" value="Transcriptional coactivator/pterin dehydratase"/>
    <property type="match status" value="1"/>
</dbReference>
<dbReference type="HAMAP" id="MF_00434">
    <property type="entry name" value="Pterin_4_alpha"/>
    <property type="match status" value="1"/>
</dbReference>
<dbReference type="InterPro" id="IPR036428">
    <property type="entry name" value="PCD_sf"/>
</dbReference>
<dbReference type="InterPro" id="IPR001533">
    <property type="entry name" value="Pterin_deHydtase"/>
</dbReference>
<dbReference type="NCBIfam" id="NF002018">
    <property type="entry name" value="PRK00823.1-3"/>
    <property type="match status" value="1"/>
</dbReference>
<dbReference type="PANTHER" id="PTHR12599">
    <property type="entry name" value="PTERIN-4-ALPHA-CARBINOLAMINE DEHYDRATASE"/>
    <property type="match status" value="1"/>
</dbReference>
<dbReference type="PANTHER" id="PTHR12599:SF0">
    <property type="entry name" value="PTERIN-4-ALPHA-CARBINOLAMINE DEHYDRATASE"/>
    <property type="match status" value="1"/>
</dbReference>
<dbReference type="Pfam" id="PF01329">
    <property type="entry name" value="Pterin_4a"/>
    <property type="match status" value="1"/>
</dbReference>
<dbReference type="SUPFAM" id="SSF55248">
    <property type="entry name" value="PCD-like"/>
    <property type="match status" value="1"/>
</dbReference>
<protein>
    <recommendedName>
        <fullName evidence="1">Putative pterin-4-alpha-carbinolamine dehydratase</fullName>
        <shortName evidence="1">PHS</shortName>
        <ecNumber evidence="1">4.2.1.96</ecNumber>
    </recommendedName>
    <alternativeName>
        <fullName evidence="1">4-alpha-hydroxy-tetrahydropterin dehydratase</fullName>
    </alternativeName>
    <alternativeName>
        <fullName evidence="1">Pterin carbinolamine dehydratase</fullName>
        <shortName evidence="1">PCD</shortName>
    </alternativeName>
</protein>
<evidence type="ECO:0000255" key="1">
    <source>
        <dbReference type="HAMAP-Rule" id="MF_00434"/>
    </source>
</evidence>
<reference key="1">
    <citation type="journal article" date="2004" name="Nature">
        <title>Genome sequence of Silicibacter pomeroyi reveals adaptations to the marine environment.</title>
        <authorList>
            <person name="Moran M.A."/>
            <person name="Buchan A."/>
            <person name="Gonzalez J.M."/>
            <person name="Heidelberg J.F."/>
            <person name="Whitman W.B."/>
            <person name="Kiene R.P."/>
            <person name="Henriksen J.R."/>
            <person name="King G.M."/>
            <person name="Belas R."/>
            <person name="Fuqua C."/>
            <person name="Brinkac L.M."/>
            <person name="Lewis M."/>
            <person name="Johri S."/>
            <person name="Weaver B."/>
            <person name="Pai G."/>
            <person name="Eisen J.A."/>
            <person name="Rahe E."/>
            <person name="Sheldon W.M."/>
            <person name="Ye W."/>
            <person name="Miller T.R."/>
            <person name="Carlton J."/>
            <person name="Rasko D.A."/>
            <person name="Paulsen I.T."/>
            <person name="Ren Q."/>
            <person name="Daugherty S.C."/>
            <person name="DeBoy R.T."/>
            <person name="Dodson R.J."/>
            <person name="Durkin A.S."/>
            <person name="Madupu R."/>
            <person name="Nelson W.C."/>
            <person name="Sullivan S.A."/>
            <person name="Rosovitz M.J."/>
            <person name="Haft D.H."/>
            <person name="Selengut J."/>
            <person name="Ward N."/>
        </authorList>
    </citation>
    <scope>NUCLEOTIDE SEQUENCE [LARGE SCALE GENOMIC DNA]</scope>
    <source>
        <strain>ATCC 700808 / DSM 15171 / DSS-3</strain>
    </source>
</reference>
<reference key="2">
    <citation type="journal article" date="2014" name="Stand. Genomic Sci.">
        <title>An updated genome annotation for the model marine bacterium Ruegeria pomeroyi DSS-3.</title>
        <authorList>
            <person name="Rivers A.R."/>
            <person name="Smith C.B."/>
            <person name="Moran M.A."/>
        </authorList>
    </citation>
    <scope>GENOME REANNOTATION</scope>
    <source>
        <strain>ATCC 700808 / DSM 15171 / DSS-3</strain>
    </source>
</reference>
<accession>Q5LM31</accession>
<comment type="catalytic activity">
    <reaction evidence="1">
        <text>(4aS,6R)-4a-hydroxy-L-erythro-5,6,7,8-tetrahydrobiopterin = (6R)-L-erythro-6,7-dihydrobiopterin + H2O</text>
        <dbReference type="Rhea" id="RHEA:11920"/>
        <dbReference type="ChEBI" id="CHEBI:15377"/>
        <dbReference type="ChEBI" id="CHEBI:15642"/>
        <dbReference type="ChEBI" id="CHEBI:43120"/>
        <dbReference type="EC" id="4.2.1.96"/>
    </reaction>
</comment>
<comment type="similarity">
    <text evidence="1">Belongs to the pterin-4-alpha-carbinolamine dehydratase family.</text>
</comment>
<name>PHS_RUEPO</name>
<feature type="chain" id="PRO_0000231474" description="Putative pterin-4-alpha-carbinolamine dehydratase">
    <location>
        <begin position="1"/>
        <end position="97"/>
    </location>
</feature>
<keyword id="KW-0456">Lyase</keyword>
<keyword id="KW-1185">Reference proteome</keyword>
<proteinExistence type="inferred from homology"/>